<sequence length="453" mass="51051">MREGSHLIVLPFPGQGHITPMSQFCKRLASKGLKLTLVLVSDKPSPPYKTEHDSITVFPISNGFQEGEEPLQDLDDYMERVETSIKNTLPKLVEDMKLSGNPPRAIVYDSTMPWLLDVAHSYGLSGAVFFTQPWLVTAIYYHVFKGSFSVPSTKYGHSTLASFPSFPMLTANDLPSFLCESSSYPNILRIVVDQLSNIDRVDIVLCNTFDKLEEKLLKWVQSLWPVLNIGPTVPSMYLDKRLSEDKNYGFSLFNAKVAECMEWLNSKEPNSVVYLSFGSLVILKEDQMLELAAGLKQSGRFFLWVVRETETHKLPRNYVEEIGEKGLIVSWSPQLDVLAHKSIGCFLTHCGWNSTLEGLSLGVPMIGMPHWTDQPTNAKFMQDVWKVGVRVKAEGDGFVRREEIMRSVEEVMEGEKGKEIRKNAEKWKVLAQEAVSEGGSSDKSINEFVSMFC</sequence>
<gene>
    <name type="primary">UGT74E2</name>
    <name type="ordered locus">At1g05680</name>
    <name type="ORF">F3F20.13</name>
</gene>
<reference key="1">
    <citation type="journal article" date="2000" name="Nature">
        <title>Sequence and analysis of chromosome 1 of the plant Arabidopsis thaliana.</title>
        <authorList>
            <person name="Theologis A."/>
            <person name="Ecker J.R."/>
            <person name="Palm C.J."/>
            <person name="Federspiel N.A."/>
            <person name="Kaul S."/>
            <person name="White O."/>
            <person name="Alonso J."/>
            <person name="Altafi H."/>
            <person name="Araujo R."/>
            <person name="Bowman C.L."/>
            <person name="Brooks S.Y."/>
            <person name="Buehler E."/>
            <person name="Chan A."/>
            <person name="Chao Q."/>
            <person name="Chen H."/>
            <person name="Cheuk R.F."/>
            <person name="Chin C.W."/>
            <person name="Chung M.K."/>
            <person name="Conn L."/>
            <person name="Conway A.B."/>
            <person name="Conway A.R."/>
            <person name="Creasy T.H."/>
            <person name="Dewar K."/>
            <person name="Dunn P."/>
            <person name="Etgu P."/>
            <person name="Feldblyum T.V."/>
            <person name="Feng J.-D."/>
            <person name="Fong B."/>
            <person name="Fujii C.Y."/>
            <person name="Gill J.E."/>
            <person name="Goldsmith A.D."/>
            <person name="Haas B."/>
            <person name="Hansen N.F."/>
            <person name="Hughes B."/>
            <person name="Huizar L."/>
            <person name="Hunter J.L."/>
            <person name="Jenkins J."/>
            <person name="Johnson-Hopson C."/>
            <person name="Khan S."/>
            <person name="Khaykin E."/>
            <person name="Kim C.J."/>
            <person name="Koo H.L."/>
            <person name="Kremenetskaia I."/>
            <person name="Kurtz D.B."/>
            <person name="Kwan A."/>
            <person name="Lam B."/>
            <person name="Langin-Hooper S."/>
            <person name="Lee A."/>
            <person name="Lee J.M."/>
            <person name="Lenz C.A."/>
            <person name="Li J.H."/>
            <person name="Li Y.-P."/>
            <person name="Lin X."/>
            <person name="Liu S.X."/>
            <person name="Liu Z.A."/>
            <person name="Luros J.S."/>
            <person name="Maiti R."/>
            <person name="Marziali A."/>
            <person name="Militscher J."/>
            <person name="Miranda M."/>
            <person name="Nguyen M."/>
            <person name="Nierman W.C."/>
            <person name="Osborne B.I."/>
            <person name="Pai G."/>
            <person name="Peterson J."/>
            <person name="Pham P.K."/>
            <person name="Rizzo M."/>
            <person name="Rooney T."/>
            <person name="Rowley D."/>
            <person name="Sakano H."/>
            <person name="Salzberg S.L."/>
            <person name="Schwartz J.R."/>
            <person name="Shinn P."/>
            <person name="Southwick A.M."/>
            <person name="Sun H."/>
            <person name="Tallon L.J."/>
            <person name="Tambunga G."/>
            <person name="Toriumi M.J."/>
            <person name="Town C.D."/>
            <person name="Utterback T."/>
            <person name="Van Aken S."/>
            <person name="Vaysberg M."/>
            <person name="Vysotskaia V.S."/>
            <person name="Walker M."/>
            <person name="Wu D."/>
            <person name="Yu G."/>
            <person name="Fraser C.M."/>
            <person name="Venter J.C."/>
            <person name="Davis R.W."/>
        </authorList>
    </citation>
    <scope>NUCLEOTIDE SEQUENCE [LARGE SCALE GENOMIC DNA]</scope>
    <source>
        <strain>cv. Columbia</strain>
    </source>
</reference>
<reference key="2">
    <citation type="journal article" date="2017" name="Plant J.">
        <title>Araport11: a complete reannotation of the Arabidopsis thaliana reference genome.</title>
        <authorList>
            <person name="Cheng C.Y."/>
            <person name="Krishnakumar V."/>
            <person name="Chan A.P."/>
            <person name="Thibaud-Nissen F."/>
            <person name="Schobel S."/>
            <person name="Town C.D."/>
        </authorList>
    </citation>
    <scope>GENOME REANNOTATION</scope>
    <source>
        <strain>cv. Columbia</strain>
    </source>
</reference>
<reference key="3">
    <citation type="submission" date="2005-05" db="EMBL/GenBank/DDBJ databases">
        <title>Arabidopsis ORF clones.</title>
        <authorList>
            <person name="Kim C.J."/>
            <person name="Chen H."/>
            <person name="Cheuk R.F."/>
            <person name="Shinn P."/>
            <person name="Ecker J.R."/>
        </authorList>
    </citation>
    <scope>NUCLEOTIDE SEQUENCE [LARGE SCALE MRNA]</scope>
    <source>
        <strain>cv. Columbia</strain>
    </source>
</reference>
<reference key="4">
    <citation type="submission" date="2006-10" db="EMBL/GenBank/DDBJ databases">
        <title>Arabidopsis ORF Clone.</title>
        <authorList>
            <person name="Bautista V.R."/>
            <person name="Kim C.J."/>
            <person name="Chen H."/>
            <person name="Quinitio C."/>
            <person name="Ecker J.R."/>
        </authorList>
    </citation>
    <scope>NUCLEOTIDE SEQUENCE [LARGE SCALE MRNA]</scope>
    <source>
        <strain>cv. Columbia</strain>
    </source>
</reference>
<reference key="5">
    <citation type="journal article" date="2001" name="J. Biol. Chem.">
        <title>Phylogenetic analysis of the UDP-glycosyltransferase multigene family of Arabidopsis thaliana.</title>
        <authorList>
            <person name="Li Y."/>
            <person name="Baldauf S."/>
            <person name="Lim E.K."/>
            <person name="Bowles D.J."/>
        </authorList>
    </citation>
    <scope>GENE FAMILY</scope>
</reference>
<reference key="6">
    <citation type="journal article" date="2010" name="Plant Cell">
        <title>Perturbation of indole-3-butyric acid homeostasis by the UDP-glucosyltransferase UGT74E2 modulates Arabidopsis architecture and water stress tolerance.</title>
        <authorList>
            <person name="Tognetti V.B."/>
            <person name="Van Aken O."/>
            <person name="Morreel K."/>
            <person name="Vandenbroucke K."/>
            <person name="van de Cotte B."/>
            <person name="De Clercq I."/>
            <person name="Chiwocha S."/>
            <person name="Fenske R."/>
            <person name="Prinsen E."/>
            <person name="Boerjan W."/>
            <person name="Genty B."/>
            <person name="Stubbs K.A."/>
            <person name="Inze D."/>
            <person name="Van Breusegem F."/>
        </authorList>
    </citation>
    <scope>FUNCTION</scope>
    <scope>CATALYTIC ACTIVITY</scope>
    <scope>BIOPHYSICOCHEMICAL PROPERTIES</scope>
    <scope>TISSUE SPECIFICITY</scope>
    <scope>INDUCTION</scope>
    <scope>DISRUPTION PHENOTYPE</scope>
</reference>
<feature type="chain" id="PRO_0000409102" description="UDP-glycosyltransferase 74E2">
    <location>
        <begin position="1"/>
        <end position="453"/>
    </location>
</feature>
<feature type="active site" description="Proton acceptor" evidence="1">
    <location>
        <position position="17"/>
    </location>
</feature>
<feature type="active site" description="Charge relay" evidence="1">
    <location>
        <position position="109"/>
    </location>
</feature>
<feature type="binding site" evidence="2">
    <location>
        <position position="17"/>
    </location>
    <ligand>
        <name>an anthocyanidin</name>
        <dbReference type="ChEBI" id="CHEBI:143576"/>
    </ligand>
</feature>
<feature type="binding site" evidence="1">
    <location>
        <position position="131"/>
    </location>
    <ligand>
        <name>UDP-alpha-D-glucose</name>
        <dbReference type="ChEBI" id="CHEBI:58885"/>
    </ligand>
</feature>
<feature type="binding site" evidence="1">
    <location>
        <position position="334"/>
    </location>
    <ligand>
        <name>UDP-alpha-D-glucose</name>
        <dbReference type="ChEBI" id="CHEBI:58885"/>
    </ligand>
</feature>
<feature type="binding site" evidence="1">
    <location>
        <position position="349"/>
    </location>
    <ligand>
        <name>UDP-alpha-D-glucose</name>
        <dbReference type="ChEBI" id="CHEBI:58885"/>
    </ligand>
</feature>
<feature type="binding site" evidence="1">
    <location>
        <position position="352"/>
    </location>
    <ligand>
        <name>UDP-alpha-D-glucose</name>
        <dbReference type="ChEBI" id="CHEBI:58885"/>
    </ligand>
</feature>
<feature type="binding site" evidence="1">
    <location>
        <position position="353"/>
    </location>
    <ligand>
        <name>UDP-alpha-D-glucose</name>
        <dbReference type="ChEBI" id="CHEBI:58885"/>
    </ligand>
</feature>
<feature type="binding site" evidence="1">
    <location>
        <position position="354"/>
    </location>
    <ligand>
        <name>UDP-alpha-D-glucose</name>
        <dbReference type="ChEBI" id="CHEBI:58885"/>
    </ligand>
</feature>
<feature type="binding site" evidence="1">
    <location>
        <position position="357"/>
    </location>
    <ligand>
        <name>UDP-alpha-D-glucose</name>
        <dbReference type="ChEBI" id="CHEBI:58885"/>
    </ligand>
</feature>
<feature type="binding site" evidence="1">
    <location>
        <position position="373"/>
    </location>
    <ligand>
        <name>UDP-alpha-D-glucose</name>
        <dbReference type="ChEBI" id="CHEBI:58885"/>
    </ligand>
</feature>
<feature type="binding site" evidence="1">
    <location>
        <position position="374"/>
    </location>
    <ligand>
        <name>UDP-alpha-D-glucose</name>
        <dbReference type="ChEBI" id="CHEBI:58885"/>
    </ligand>
</feature>
<proteinExistence type="evidence at protein level"/>
<comment type="function">
    <text evidence="3">Glucosyltransferase that acts on the auxin indole-3-butyric acid (IBA). Mediates abiotic stress responses and stress-induced morphological adaptations by regulating auxin homeostasis. Possesses low activity in vitro on jasmonate (JA) and the synthetic auxin analog naphthaleneacetic acid (NAA).</text>
</comment>
<comment type="catalytic activity">
    <reaction evidence="3">
        <text>(indol-3-yl)butanoate + UDP-alpha-D-glucose = 4-(indol-3-yl)butanoyl-beta-D-glucose + UDP</text>
        <dbReference type="Rhea" id="RHEA:62708"/>
        <dbReference type="ChEBI" id="CHEBI:58223"/>
        <dbReference type="ChEBI" id="CHEBI:58885"/>
        <dbReference type="ChEBI" id="CHEBI:143274"/>
        <dbReference type="ChEBI" id="CHEBI:145927"/>
    </reaction>
</comment>
<comment type="biophysicochemical properties">
    <kinetics>
        <KM evidence="3">1.39 uM for indole-3-butyric acid</KM>
    </kinetics>
</comment>
<comment type="tissue specificity">
    <text evidence="3">Expressed in roots, cotyledons and leaf hydathodes.</text>
</comment>
<comment type="induction">
    <text evidence="3">By H(2)O(2) and abiotic stresses.</text>
</comment>
<comment type="disruption phenotype">
    <text evidence="3">No visible phenotype under normal growth condition.</text>
</comment>
<comment type="miscellaneous">
    <text>Plants overexpressing UGT74E2 develop more compact rosette structure with shorter petioles, dark-green leaves and a shoot branching phenotype after inflorescence emergence. Mature plants are shorter than wild-type. Over-expression of UGT74E2 increases plant tolerance to osmotic stress.</text>
</comment>
<comment type="similarity">
    <text evidence="4">Belongs to the UDP-glycosyltransferase family.</text>
</comment>
<dbReference type="EC" id="2.4.1.-" evidence="3"/>
<dbReference type="EMBL" id="AC007153">
    <property type="protein sequence ID" value="AAD30627.1"/>
    <property type="molecule type" value="Genomic_DNA"/>
</dbReference>
<dbReference type="EMBL" id="CP002684">
    <property type="protein sequence ID" value="AEE27876.1"/>
    <property type="molecule type" value="Genomic_DNA"/>
</dbReference>
<dbReference type="EMBL" id="BT022019">
    <property type="protein sequence ID" value="AAY25431.1"/>
    <property type="molecule type" value="mRNA"/>
</dbReference>
<dbReference type="EMBL" id="BT029189">
    <property type="protein sequence ID" value="ABJ17124.1"/>
    <property type="molecule type" value="mRNA"/>
</dbReference>
<dbReference type="PIR" id="A86191">
    <property type="entry name" value="A86191"/>
</dbReference>
<dbReference type="RefSeq" id="NP_172059.1">
    <property type="nucleotide sequence ID" value="NM_100448.4"/>
</dbReference>
<dbReference type="SMR" id="Q9SYK9"/>
<dbReference type="BioGRID" id="22317">
    <property type="interactions" value="1"/>
</dbReference>
<dbReference type="FunCoup" id="Q9SYK9">
    <property type="interactions" value="114"/>
</dbReference>
<dbReference type="IntAct" id="Q9SYK9">
    <property type="interactions" value="1"/>
</dbReference>
<dbReference type="STRING" id="3702.Q9SYK9"/>
<dbReference type="CAZy" id="GT1">
    <property type="family name" value="Glycosyltransferase Family 1"/>
</dbReference>
<dbReference type="GlyGen" id="Q9SYK9">
    <property type="glycosylation" value="1 site"/>
</dbReference>
<dbReference type="PaxDb" id="3702-AT1G05680.1"/>
<dbReference type="ProteomicsDB" id="228562"/>
<dbReference type="EnsemblPlants" id="AT1G05680.1">
    <property type="protein sequence ID" value="AT1G05680.1"/>
    <property type="gene ID" value="AT1G05680"/>
</dbReference>
<dbReference type="GeneID" id="837075"/>
<dbReference type="Gramene" id="AT1G05680.1">
    <property type="protein sequence ID" value="AT1G05680.1"/>
    <property type="gene ID" value="AT1G05680"/>
</dbReference>
<dbReference type="KEGG" id="ath:AT1G05680"/>
<dbReference type="Araport" id="AT1G05680"/>
<dbReference type="TAIR" id="AT1G05680">
    <property type="gene designation" value="UGT74E2"/>
</dbReference>
<dbReference type="eggNOG" id="KOG1192">
    <property type="taxonomic scope" value="Eukaryota"/>
</dbReference>
<dbReference type="HOGENOM" id="CLU_001724_0_1_1"/>
<dbReference type="InParanoid" id="Q9SYK9"/>
<dbReference type="OMA" id="WVQSLWP"/>
<dbReference type="OrthoDB" id="5835829at2759"/>
<dbReference type="PhylomeDB" id="Q9SYK9"/>
<dbReference type="BioCyc" id="ARA:AT1G05680-MONOMER"/>
<dbReference type="BioCyc" id="MetaCyc:AT1G05680-MONOMER"/>
<dbReference type="PRO" id="PR:Q9SYK9"/>
<dbReference type="Proteomes" id="UP000006548">
    <property type="component" value="Chromosome 1"/>
</dbReference>
<dbReference type="ExpressionAtlas" id="Q9SYK9">
    <property type="expression patterns" value="baseline and differential"/>
</dbReference>
<dbReference type="GO" id="GO:0052638">
    <property type="term" value="F:indole-3-butyrate beta-glucosyltransferase activity"/>
    <property type="evidence" value="ECO:0000314"/>
    <property type="project" value="TAIR"/>
</dbReference>
<dbReference type="GO" id="GO:0035251">
    <property type="term" value="F:UDP-glucosyltransferase activity"/>
    <property type="evidence" value="ECO:0000314"/>
    <property type="project" value="TAIR"/>
</dbReference>
<dbReference type="GO" id="GO:0071475">
    <property type="term" value="P:cellular hyperosmotic salinity response"/>
    <property type="evidence" value="ECO:0000270"/>
    <property type="project" value="TAIR"/>
</dbReference>
<dbReference type="GO" id="GO:0071215">
    <property type="term" value="P:cellular response to abscisic acid stimulus"/>
    <property type="evidence" value="ECO:0000315"/>
    <property type="project" value="TAIR"/>
</dbReference>
<dbReference type="GO" id="GO:0070301">
    <property type="term" value="P:cellular response to hydrogen peroxide"/>
    <property type="evidence" value="ECO:0000270"/>
    <property type="project" value="TAIR"/>
</dbReference>
<dbReference type="GO" id="GO:0042631">
    <property type="term" value="P:cellular response to water deprivation"/>
    <property type="evidence" value="ECO:0000270"/>
    <property type="project" value="TAIR"/>
</dbReference>
<dbReference type="GO" id="GO:0080024">
    <property type="term" value="P:indolebutyric acid metabolic process"/>
    <property type="evidence" value="ECO:0000315"/>
    <property type="project" value="TAIR"/>
</dbReference>
<dbReference type="GO" id="GO:0010016">
    <property type="term" value="P:shoot system morphogenesis"/>
    <property type="evidence" value="ECO:0000315"/>
    <property type="project" value="TAIR"/>
</dbReference>
<dbReference type="CDD" id="cd03784">
    <property type="entry name" value="GT1_Gtf-like"/>
    <property type="match status" value="1"/>
</dbReference>
<dbReference type="FunFam" id="3.40.50.2000:FF:000019">
    <property type="entry name" value="Glycosyltransferase"/>
    <property type="match status" value="1"/>
</dbReference>
<dbReference type="FunFam" id="3.40.50.2000:FF:000057">
    <property type="entry name" value="Glycosyltransferase"/>
    <property type="match status" value="1"/>
</dbReference>
<dbReference type="Gene3D" id="3.40.50.2000">
    <property type="entry name" value="Glycogen Phosphorylase B"/>
    <property type="match status" value="2"/>
</dbReference>
<dbReference type="InterPro" id="IPR002213">
    <property type="entry name" value="UDP_glucos_trans"/>
</dbReference>
<dbReference type="InterPro" id="IPR035595">
    <property type="entry name" value="UDP_glycos_trans_CS"/>
</dbReference>
<dbReference type="PANTHER" id="PTHR11926">
    <property type="entry name" value="GLUCOSYL/GLUCURONOSYL TRANSFERASES"/>
    <property type="match status" value="1"/>
</dbReference>
<dbReference type="PANTHER" id="PTHR11926:SF1560">
    <property type="entry name" value="UDP-GLYCOSYLTRANSFERASE 74E1-RELATED"/>
    <property type="match status" value="1"/>
</dbReference>
<dbReference type="Pfam" id="PF00201">
    <property type="entry name" value="UDPGT"/>
    <property type="match status" value="1"/>
</dbReference>
<dbReference type="SUPFAM" id="SSF53756">
    <property type="entry name" value="UDP-Glycosyltransferase/glycogen phosphorylase"/>
    <property type="match status" value="1"/>
</dbReference>
<dbReference type="PROSITE" id="PS00375">
    <property type="entry name" value="UDPGT"/>
    <property type="match status" value="1"/>
</dbReference>
<accession>Q9SYK9</accession>
<protein>
    <recommendedName>
        <fullName>UDP-glycosyltransferase 74E2</fullName>
        <ecNumber evidence="3">2.4.1.-</ecNumber>
    </recommendedName>
</protein>
<organism>
    <name type="scientific">Arabidopsis thaliana</name>
    <name type="common">Mouse-ear cress</name>
    <dbReference type="NCBI Taxonomy" id="3702"/>
    <lineage>
        <taxon>Eukaryota</taxon>
        <taxon>Viridiplantae</taxon>
        <taxon>Streptophyta</taxon>
        <taxon>Embryophyta</taxon>
        <taxon>Tracheophyta</taxon>
        <taxon>Spermatophyta</taxon>
        <taxon>Magnoliopsida</taxon>
        <taxon>eudicotyledons</taxon>
        <taxon>Gunneridae</taxon>
        <taxon>Pentapetalae</taxon>
        <taxon>rosids</taxon>
        <taxon>malvids</taxon>
        <taxon>Brassicales</taxon>
        <taxon>Brassicaceae</taxon>
        <taxon>Camelineae</taxon>
        <taxon>Arabidopsis</taxon>
    </lineage>
</organism>
<name>U74E2_ARATH</name>
<keyword id="KW-0328">Glycosyltransferase</keyword>
<keyword id="KW-1185">Reference proteome</keyword>
<keyword id="KW-0346">Stress response</keyword>
<keyword id="KW-0808">Transferase</keyword>
<evidence type="ECO:0000250" key="1">
    <source>
        <dbReference type="UniProtKB" id="A0A0A1HA03"/>
    </source>
</evidence>
<evidence type="ECO:0000250" key="2">
    <source>
        <dbReference type="UniProtKB" id="P51094"/>
    </source>
</evidence>
<evidence type="ECO:0000269" key="3">
    <source>
    </source>
</evidence>
<evidence type="ECO:0000305" key="4"/>